<evidence type="ECO:0000255" key="1">
    <source>
        <dbReference type="PROSITE-ProRule" id="PRU00366"/>
    </source>
</evidence>
<evidence type="ECO:0000256" key="2">
    <source>
        <dbReference type="SAM" id="MobiDB-lite"/>
    </source>
</evidence>
<evidence type="ECO:0000269" key="3">
    <source>
    </source>
</evidence>
<evidence type="ECO:0000305" key="4"/>
<dbReference type="EMBL" id="AY345234">
    <property type="protein sequence ID" value="AAQ23984.1"/>
    <property type="molecule type" value="mRNA"/>
</dbReference>
<dbReference type="EMBL" id="CM000126">
    <property type="protein sequence ID" value="EAY77380.1"/>
    <property type="molecule type" value="Genomic_DNA"/>
</dbReference>
<dbReference type="SMR" id="A2WZI4"/>
<dbReference type="STRING" id="39946.A2WZI4"/>
<dbReference type="EnsemblPlants" id="BGIOSGA005257-TA">
    <property type="protein sequence ID" value="BGIOSGA005257-PA"/>
    <property type="gene ID" value="BGIOSGA005257"/>
</dbReference>
<dbReference type="EnsemblPlants" id="OsGoSa_01g0047660.01">
    <property type="protein sequence ID" value="OsGoSa_01g0047660.01"/>
    <property type="gene ID" value="OsGoSa_01g0047660"/>
</dbReference>
<dbReference type="EnsemblPlants" id="OsIR64_01g0046900.01">
    <property type="protein sequence ID" value="OsIR64_01g0046900.01"/>
    <property type="gene ID" value="OsIR64_01g0046900"/>
</dbReference>
<dbReference type="EnsemblPlants" id="OsKYG_01g0047360.01">
    <property type="protein sequence ID" value="OsKYG_01g0047360.01"/>
    <property type="gene ID" value="OsKYG_01g0047360"/>
</dbReference>
<dbReference type="EnsemblPlants" id="OsLaMu_01g0047380.01">
    <property type="protein sequence ID" value="OsLaMu_01g0047380.01"/>
    <property type="gene ID" value="OsLaMu_01g0047380"/>
</dbReference>
<dbReference type="EnsemblPlants" id="OsLima_01g0047560.01">
    <property type="protein sequence ID" value="OsLima_01g0047560.01"/>
    <property type="gene ID" value="OsLima_01g0047560"/>
</dbReference>
<dbReference type="EnsemblPlants" id="OsLiXu_Ung0004610.01">
    <property type="protein sequence ID" value="OsLiXu_Ung0004610.01"/>
    <property type="gene ID" value="OsLiXu_Ung0004610"/>
</dbReference>
<dbReference type="EnsemblPlants" id="OsMH63_01G048250_01">
    <property type="protein sequence ID" value="OsMH63_01G048250_01"/>
    <property type="gene ID" value="OsMH63_01G048250"/>
</dbReference>
<dbReference type="EnsemblPlants" id="OsPr106_01g0047430.01">
    <property type="protein sequence ID" value="OsPr106_01g0047430.01"/>
    <property type="gene ID" value="OsPr106_01g0047430"/>
</dbReference>
<dbReference type="EnsemblPlants" id="OsZS97_01G047530_01">
    <property type="protein sequence ID" value="OsZS97_01G047530_01"/>
    <property type="gene ID" value="OsZS97_01G047530"/>
</dbReference>
<dbReference type="Gramene" id="BGIOSGA005257-TA">
    <property type="protein sequence ID" value="BGIOSGA005257-PA"/>
    <property type="gene ID" value="BGIOSGA005257"/>
</dbReference>
<dbReference type="Gramene" id="OsGoSa_01g0047660.01">
    <property type="protein sequence ID" value="OsGoSa_01g0047660.01"/>
    <property type="gene ID" value="OsGoSa_01g0047660"/>
</dbReference>
<dbReference type="Gramene" id="OsIR64_01g0046900.01">
    <property type="protein sequence ID" value="OsIR64_01g0046900.01"/>
    <property type="gene ID" value="OsIR64_01g0046900"/>
</dbReference>
<dbReference type="Gramene" id="OsKYG_01g0047360.01">
    <property type="protein sequence ID" value="OsKYG_01g0047360.01"/>
    <property type="gene ID" value="OsKYG_01g0047360"/>
</dbReference>
<dbReference type="Gramene" id="OsLaMu_01g0047380.01">
    <property type="protein sequence ID" value="OsLaMu_01g0047380.01"/>
    <property type="gene ID" value="OsLaMu_01g0047380"/>
</dbReference>
<dbReference type="Gramene" id="OsLima_01g0047560.01">
    <property type="protein sequence ID" value="OsLima_01g0047560.01"/>
    <property type="gene ID" value="OsLima_01g0047560"/>
</dbReference>
<dbReference type="Gramene" id="OsLiXu_Ung0004610.01">
    <property type="protein sequence ID" value="OsLiXu_Ung0004610.01"/>
    <property type="gene ID" value="OsLiXu_Ung0004610"/>
</dbReference>
<dbReference type="Gramene" id="OsMH63_01G048250_01">
    <property type="protein sequence ID" value="OsMH63_01G048250_01"/>
    <property type="gene ID" value="OsMH63_01G048250"/>
</dbReference>
<dbReference type="Gramene" id="OsPr106_01g0047430.01">
    <property type="protein sequence ID" value="OsPr106_01g0047430.01"/>
    <property type="gene ID" value="OsPr106_01g0047430"/>
</dbReference>
<dbReference type="Gramene" id="OsZS97_01G047530_01">
    <property type="protein sequence ID" value="OsZS97_01G047530_01"/>
    <property type="gene ID" value="OsZS97_01G047530"/>
</dbReference>
<dbReference type="HOGENOM" id="CLU_063331_1_0_1"/>
<dbReference type="OMA" id="WDDHAYF"/>
<dbReference type="OrthoDB" id="676764at2759"/>
<dbReference type="Proteomes" id="UP000007015">
    <property type="component" value="Chromosome 1"/>
</dbReference>
<dbReference type="GO" id="GO:0005634">
    <property type="term" value="C:nucleus"/>
    <property type="evidence" value="ECO:0007669"/>
    <property type="project" value="UniProtKB-SubCell"/>
</dbReference>
<dbReference type="GO" id="GO:0003677">
    <property type="term" value="F:DNA binding"/>
    <property type="evidence" value="ECO:0007669"/>
    <property type="project" value="UniProtKB-KW"/>
</dbReference>
<dbReference type="GO" id="GO:0003700">
    <property type="term" value="F:DNA-binding transcription factor activity"/>
    <property type="evidence" value="ECO:0007669"/>
    <property type="project" value="InterPro"/>
</dbReference>
<dbReference type="CDD" id="cd00018">
    <property type="entry name" value="AP2"/>
    <property type="match status" value="1"/>
</dbReference>
<dbReference type="Gene3D" id="3.30.730.10">
    <property type="entry name" value="AP2/ERF domain"/>
    <property type="match status" value="1"/>
</dbReference>
<dbReference type="InterPro" id="IPR001471">
    <property type="entry name" value="AP2/ERF_dom"/>
</dbReference>
<dbReference type="InterPro" id="IPR036955">
    <property type="entry name" value="AP2/ERF_dom_sf"/>
</dbReference>
<dbReference type="InterPro" id="IPR016177">
    <property type="entry name" value="DNA-bd_dom_sf"/>
</dbReference>
<dbReference type="InterPro" id="IPR045277">
    <property type="entry name" value="DRE1A-I"/>
</dbReference>
<dbReference type="PANTHER" id="PTHR31839">
    <property type="entry name" value="DEHYDRATION-RESPONSIVE ELEMENT-BINDING PROTEIN 1D"/>
    <property type="match status" value="1"/>
</dbReference>
<dbReference type="PANTHER" id="PTHR31839:SF42">
    <property type="entry name" value="DEHYDRATION-RESPONSIVE ELEMENT-BINDING PROTEIN 1F"/>
    <property type="match status" value="1"/>
</dbReference>
<dbReference type="Pfam" id="PF00847">
    <property type="entry name" value="AP2"/>
    <property type="match status" value="1"/>
</dbReference>
<dbReference type="PRINTS" id="PR00367">
    <property type="entry name" value="ETHRSPELEMNT"/>
</dbReference>
<dbReference type="SMART" id="SM00380">
    <property type="entry name" value="AP2"/>
    <property type="match status" value="1"/>
</dbReference>
<dbReference type="SUPFAM" id="SSF54171">
    <property type="entry name" value="DNA-binding domain"/>
    <property type="match status" value="1"/>
</dbReference>
<dbReference type="PROSITE" id="PS51032">
    <property type="entry name" value="AP2_ERF"/>
    <property type="match status" value="1"/>
</dbReference>
<organism>
    <name type="scientific">Oryza sativa subsp. indica</name>
    <name type="common">Rice</name>
    <dbReference type="NCBI Taxonomy" id="39946"/>
    <lineage>
        <taxon>Eukaryota</taxon>
        <taxon>Viridiplantae</taxon>
        <taxon>Streptophyta</taxon>
        <taxon>Embryophyta</taxon>
        <taxon>Tracheophyta</taxon>
        <taxon>Spermatophyta</taxon>
        <taxon>Magnoliopsida</taxon>
        <taxon>Liliopsida</taxon>
        <taxon>Poales</taxon>
        <taxon>Poaceae</taxon>
        <taxon>BOP clade</taxon>
        <taxon>Oryzoideae</taxon>
        <taxon>Oryzeae</taxon>
        <taxon>Oryzinae</taxon>
        <taxon>Oryza</taxon>
        <taxon>Oryza sativa</taxon>
    </lineage>
</organism>
<protein>
    <recommendedName>
        <fullName>Dehydration-responsive element-binding protein 1F</fullName>
        <shortName>Protein DREB1F</shortName>
    </recommendedName>
    <alternativeName>
        <fullName>Protein C-repeat-binding factor 2</fullName>
        <shortName>rCBF2</shortName>
    </alternativeName>
</protein>
<comment type="function">
    <text evidence="3">Transcriptional activator that binds specifically to the DNA sequence 5'-[AG]CCGAC-3'. Binding to the C-repeat/DRE element mediates high salinity- and dehydration-inducible transcription.</text>
</comment>
<comment type="subcellular location">
    <subcellularLocation>
        <location evidence="4">Nucleus</location>
    </subcellularLocation>
</comment>
<comment type="tissue specificity">
    <text evidence="3">Mostly expressed in developing seeds and apices.</text>
</comment>
<comment type="induction">
    <text evidence="3">By calcium ion, methyl-jasmonate (MeJA), cold, drought, and high salinity stress.</text>
</comment>
<comment type="similarity">
    <text evidence="4">Belongs to the AP2/ERF transcription factor family. ERF subfamily.</text>
</comment>
<sequence>MDTEDTSSASSSSVSPPSSPGGGHHHRLPPKRRAGRKKFRETRHPVYRGVRARAGGSRWVCEVREPQAQARIWLGTYPTPEMAARAHDVAAIALRGERGAELNFPDSPSTLPRARTASPEDIRLAAAQAAELYRRPPPPLALPEDPQEGTSGGGATATSGRPAAVFVDEDAIFDMPGLIDDMARGMMLTPPAIGRSLDDWAAIDDDDDHYHMDYKLWMD</sequence>
<gene>
    <name type="primary">DREB1F</name>
    <name type="synonym">CBF2</name>
    <name type="synonym">ERF27</name>
    <name type="ORF">OsI_005227</name>
</gene>
<proteinExistence type="evidence at transcript level"/>
<feature type="chain" id="PRO_0000323035" description="Dehydration-responsive element-binding protein 1F">
    <location>
        <begin position="1"/>
        <end position="219"/>
    </location>
</feature>
<feature type="DNA-binding region" description="AP2/ERF" evidence="1">
    <location>
        <begin position="46"/>
        <end position="105"/>
    </location>
</feature>
<feature type="region of interest" description="Disordered" evidence="2">
    <location>
        <begin position="1"/>
        <end position="45"/>
    </location>
</feature>
<feature type="region of interest" description="Disordered" evidence="2">
    <location>
        <begin position="134"/>
        <end position="161"/>
    </location>
</feature>
<feature type="compositionally biased region" description="Low complexity" evidence="2">
    <location>
        <begin position="7"/>
        <end position="16"/>
    </location>
</feature>
<feature type="compositionally biased region" description="Basic residues" evidence="2">
    <location>
        <begin position="23"/>
        <end position="41"/>
    </location>
</feature>
<reference key="1">
    <citation type="journal article" date="2007" name="Biotechnol. Lett.">
        <title>Isolated and characterization of a cDNA encoding ethylene-responsive element binding protein (EREBP)/AP2-type protein, RCBF2, in Oryza sativa L.</title>
        <authorList>
            <person name="Liu J.-G."/>
            <person name="Zhang Z."/>
            <person name="Qin Q.-L."/>
            <person name="Peng R.-H."/>
            <person name="Xiong A.-S."/>
            <person name="Chen J.-M."/>
            <person name="Xu F."/>
            <person name="Zhu H."/>
            <person name="Yao Q.-H."/>
        </authorList>
    </citation>
    <scope>NUCLEOTIDE SEQUENCE [MRNA]</scope>
    <scope>FUNCTION</scope>
    <scope>TISSUE SPECIFICITY</scope>
    <scope>INDUCTION</scope>
    <source>
        <strain>cv. IR36</strain>
    </source>
</reference>
<reference key="2">
    <citation type="journal article" date="2005" name="PLoS Biol.">
        <title>The genomes of Oryza sativa: a history of duplications.</title>
        <authorList>
            <person name="Yu J."/>
            <person name="Wang J."/>
            <person name="Lin W."/>
            <person name="Li S."/>
            <person name="Li H."/>
            <person name="Zhou J."/>
            <person name="Ni P."/>
            <person name="Dong W."/>
            <person name="Hu S."/>
            <person name="Zeng C."/>
            <person name="Zhang J."/>
            <person name="Zhang Y."/>
            <person name="Li R."/>
            <person name="Xu Z."/>
            <person name="Li S."/>
            <person name="Li X."/>
            <person name="Zheng H."/>
            <person name="Cong L."/>
            <person name="Lin L."/>
            <person name="Yin J."/>
            <person name="Geng J."/>
            <person name="Li G."/>
            <person name="Shi J."/>
            <person name="Liu J."/>
            <person name="Lv H."/>
            <person name="Li J."/>
            <person name="Wang J."/>
            <person name="Deng Y."/>
            <person name="Ran L."/>
            <person name="Shi X."/>
            <person name="Wang X."/>
            <person name="Wu Q."/>
            <person name="Li C."/>
            <person name="Ren X."/>
            <person name="Wang J."/>
            <person name="Wang X."/>
            <person name="Li D."/>
            <person name="Liu D."/>
            <person name="Zhang X."/>
            <person name="Ji Z."/>
            <person name="Zhao W."/>
            <person name="Sun Y."/>
            <person name="Zhang Z."/>
            <person name="Bao J."/>
            <person name="Han Y."/>
            <person name="Dong L."/>
            <person name="Ji J."/>
            <person name="Chen P."/>
            <person name="Wu S."/>
            <person name="Liu J."/>
            <person name="Xiao Y."/>
            <person name="Bu D."/>
            <person name="Tan J."/>
            <person name="Yang L."/>
            <person name="Ye C."/>
            <person name="Zhang J."/>
            <person name="Xu J."/>
            <person name="Zhou Y."/>
            <person name="Yu Y."/>
            <person name="Zhang B."/>
            <person name="Zhuang S."/>
            <person name="Wei H."/>
            <person name="Liu B."/>
            <person name="Lei M."/>
            <person name="Yu H."/>
            <person name="Li Y."/>
            <person name="Xu H."/>
            <person name="Wei S."/>
            <person name="He X."/>
            <person name="Fang L."/>
            <person name="Zhang Z."/>
            <person name="Zhang Y."/>
            <person name="Huang X."/>
            <person name="Su Z."/>
            <person name="Tong W."/>
            <person name="Li J."/>
            <person name="Tong Z."/>
            <person name="Li S."/>
            <person name="Ye J."/>
            <person name="Wang L."/>
            <person name="Fang L."/>
            <person name="Lei T."/>
            <person name="Chen C.-S."/>
            <person name="Chen H.-C."/>
            <person name="Xu Z."/>
            <person name="Li H."/>
            <person name="Huang H."/>
            <person name="Zhang F."/>
            <person name="Xu H."/>
            <person name="Li N."/>
            <person name="Zhao C."/>
            <person name="Li S."/>
            <person name="Dong L."/>
            <person name="Huang Y."/>
            <person name="Li L."/>
            <person name="Xi Y."/>
            <person name="Qi Q."/>
            <person name="Li W."/>
            <person name="Zhang B."/>
            <person name="Hu W."/>
            <person name="Zhang Y."/>
            <person name="Tian X."/>
            <person name="Jiao Y."/>
            <person name="Liang X."/>
            <person name="Jin J."/>
            <person name="Gao L."/>
            <person name="Zheng W."/>
            <person name="Hao B."/>
            <person name="Liu S.-M."/>
            <person name="Wang W."/>
            <person name="Yuan L."/>
            <person name="Cao M."/>
            <person name="McDermott J."/>
            <person name="Samudrala R."/>
            <person name="Wang J."/>
            <person name="Wong G.K.-S."/>
            <person name="Yang H."/>
        </authorList>
    </citation>
    <scope>NUCLEOTIDE SEQUENCE [LARGE SCALE GENOMIC DNA]</scope>
    <source>
        <strain>cv. 93-11</strain>
    </source>
</reference>
<keyword id="KW-0010">Activator</keyword>
<keyword id="KW-0238">DNA-binding</keyword>
<keyword id="KW-0539">Nucleus</keyword>
<keyword id="KW-1185">Reference proteome</keyword>
<keyword id="KW-0346">Stress response</keyword>
<keyword id="KW-0804">Transcription</keyword>
<keyword id="KW-0805">Transcription regulation</keyword>
<name>DRE1F_ORYSI</name>
<accession>A2WZI4</accession>
<accession>Q6VAK9</accession>